<proteinExistence type="evidence at protein level"/>
<organism>
    <name type="scientific">Mus musculus</name>
    <name type="common">Mouse</name>
    <dbReference type="NCBI Taxonomy" id="10090"/>
    <lineage>
        <taxon>Eukaryota</taxon>
        <taxon>Metazoa</taxon>
        <taxon>Chordata</taxon>
        <taxon>Craniata</taxon>
        <taxon>Vertebrata</taxon>
        <taxon>Euteleostomi</taxon>
        <taxon>Mammalia</taxon>
        <taxon>Eutheria</taxon>
        <taxon>Euarchontoglires</taxon>
        <taxon>Glires</taxon>
        <taxon>Rodentia</taxon>
        <taxon>Myomorpha</taxon>
        <taxon>Muroidea</taxon>
        <taxon>Muridae</taxon>
        <taxon>Murinae</taxon>
        <taxon>Mus</taxon>
        <taxon>Mus</taxon>
    </lineage>
</organism>
<feature type="chain" id="PRO_0000183949" description="Synaptotagmin-4">
    <location>
        <begin position="1"/>
        <end position="425"/>
    </location>
</feature>
<feature type="topological domain" description="Vesicular" evidence="3">
    <location>
        <begin position="1"/>
        <end position="16"/>
    </location>
</feature>
<feature type="transmembrane region" description="Helical" evidence="3">
    <location>
        <begin position="17"/>
        <end position="37"/>
    </location>
</feature>
<feature type="topological domain" description="Cytoplasmic" evidence="3">
    <location>
        <begin position="38"/>
        <end position="425"/>
    </location>
</feature>
<feature type="domain" description="C2 1" evidence="4">
    <location>
        <begin position="153"/>
        <end position="274"/>
    </location>
</feature>
<feature type="domain" description="C2 2" evidence="4">
    <location>
        <begin position="287"/>
        <end position="420"/>
    </location>
</feature>
<feature type="region of interest" description="Disordered" evidence="5">
    <location>
        <begin position="127"/>
        <end position="147"/>
    </location>
</feature>
<feature type="compositionally biased region" description="Low complexity" evidence="5">
    <location>
        <begin position="137"/>
        <end position="146"/>
    </location>
</feature>
<feature type="binding site" evidence="4">
    <location>
        <position position="246"/>
    </location>
    <ligand>
        <name>Ca(2+)</name>
        <dbReference type="ChEBI" id="CHEBI:29108"/>
    </ligand>
</feature>
<feature type="binding site" evidence="4">
    <location>
        <position position="249"/>
    </location>
    <ligand>
        <name>Ca(2+)</name>
        <dbReference type="ChEBI" id="CHEBI:29108"/>
    </ligand>
</feature>
<feature type="binding site" evidence="4">
    <location>
        <position position="252"/>
    </location>
    <ligand>
        <name>Ca(2+)</name>
        <dbReference type="ChEBI" id="CHEBI:29108"/>
    </ligand>
</feature>
<feature type="modified residue" description="Phosphoserine; by MAPK8" evidence="9">
    <location>
        <position position="135"/>
    </location>
</feature>
<feature type="sequence conflict" description="In Ref. 1; AAA20971." evidence="8" ref="1">
    <original>K</original>
    <variation>Q</variation>
    <location>
        <position position="70"/>
    </location>
</feature>
<feature type="sequence conflict" description="In Ref. 1; AAA20971." evidence="8" ref="1">
    <original>A</original>
    <variation>T</variation>
    <location>
        <position position="85"/>
    </location>
</feature>
<feature type="sequence conflict" description="In Ref. 1; AAA20971." evidence="8" ref="1">
    <original>D</original>
    <variation>G</variation>
    <location>
        <position position="220"/>
    </location>
</feature>
<feature type="sequence conflict" description="In Ref. 2; BAC31726." evidence="8" ref="2">
    <original>D</original>
    <variation>N</variation>
    <location>
        <position position="246"/>
    </location>
</feature>
<protein>
    <recommendedName>
        <fullName>Synaptotagmin-4</fullName>
    </recommendedName>
    <alternativeName>
        <fullName>Synaptotagmin IV</fullName>
        <shortName>SytIV</shortName>
    </alternativeName>
</protein>
<keyword id="KW-0106">Calcium</keyword>
<keyword id="KW-0968">Cytoplasmic vesicle</keyword>
<keyword id="KW-0221">Differentiation</keyword>
<keyword id="KW-0472">Membrane</keyword>
<keyword id="KW-0479">Metal-binding</keyword>
<keyword id="KW-0597">Phosphoprotein</keyword>
<keyword id="KW-1185">Reference proteome</keyword>
<keyword id="KW-0677">Repeat</keyword>
<keyword id="KW-0812">Transmembrane</keyword>
<keyword id="KW-1133">Transmembrane helix</keyword>
<reference key="1">
    <citation type="journal article" date="1994" name="Proc. Natl. Acad. Sci. U.S.A.">
        <title>A third synaptotagmin gene, Syt3, in the mouse.</title>
        <authorList>
            <person name="Hilbush B.S."/>
            <person name="Morgan J.I."/>
        </authorList>
    </citation>
    <scope>NUCLEOTIDE SEQUENCE [MRNA]</scope>
    <scope>TISSUE SPECIFICITY</scope>
    <source>
        <strain>BALB/cJ</strain>
        <tissue>Brain</tissue>
    </source>
</reference>
<reference key="2">
    <citation type="journal article" date="2005" name="Science">
        <title>The transcriptional landscape of the mammalian genome.</title>
        <authorList>
            <person name="Carninci P."/>
            <person name="Kasukawa T."/>
            <person name="Katayama S."/>
            <person name="Gough J."/>
            <person name="Frith M.C."/>
            <person name="Maeda N."/>
            <person name="Oyama R."/>
            <person name="Ravasi T."/>
            <person name="Lenhard B."/>
            <person name="Wells C."/>
            <person name="Kodzius R."/>
            <person name="Shimokawa K."/>
            <person name="Bajic V.B."/>
            <person name="Brenner S.E."/>
            <person name="Batalov S."/>
            <person name="Forrest A.R."/>
            <person name="Zavolan M."/>
            <person name="Davis M.J."/>
            <person name="Wilming L.G."/>
            <person name="Aidinis V."/>
            <person name="Allen J.E."/>
            <person name="Ambesi-Impiombato A."/>
            <person name="Apweiler R."/>
            <person name="Aturaliya R.N."/>
            <person name="Bailey T.L."/>
            <person name="Bansal M."/>
            <person name="Baxter L."/>
            <person name="Beisel K.W."/>
            <person name="Bersano T."/>
            <person name="Bono H."/>
            <person name="Chalk A.M."/>
            <person name="Chiu K.P."/>
            <person name="Choudhary V."/>
            <person name="Christoffels A."/>
            <person name="Clutterbuck D.R."/>
            <person name="Crowe M.L."/>
            <person name="Dalla E."/>
            <person name="Dalrymple B.P."/>
            <person name="de Bono B."/>
            <person name="Della Gatta G."/>
            <person name="di Bernardo D."/>
            <person name="Down T."/>
            <person name="Engstrom P."/>
            <person name="Fagiolini M."/>
            <person name="Faulkner G."/>
            <person name="Fletcher C.F."/>
            <person name="Fukushima T."/>
            <person name="Furuno M."/>
            <person name="Futaki S."/>
            <person name="Gariboldi M."/>
            <person name="Georgii-Hemming P."/>
            <person name="Gingeras T.R."/>
            <person name="Gojobori T."/>
            <person name="Green R.E."/>
            <person name="Gustincich S."/>
            <person name="Harbers M."/>
            <person name="Hayashi Y."/>
            <person name="Hensch T.K."/>
            <person name="Hirokawa N."/>
            <person name="Hill D."/>
            <person name="Huminiecki L."/>
            <person name="Iacono M."/>
            <person name="Ikeo K."/>
            <person name="Iwama A."/>
            <person name="Ishikawa T."/>
            <person name="Jakt M."/>
            <person name="Kanapin A."/>
            <person name="Katoh M."/>
            <person name="Kawasawa Y."/>
            <person name="Kelso J."/>
            <person name="Kitamura H."/>
            <person name="Kitano H."/>
            <person name="Kollias G."/>
            <person name="Krishnan S.P."/>
            <person name="Kruger A."/>
            <person name="Kummerfeld S.K."/>
            <person name="Kurochkin I.V."/>
            <person name="Lareau L.F."/>
            <person name="Lazarevic D."/>
            <person name="Lipovich L."/>
            <person name="Liu J."/>
            <person name="Liuni S."/>
            <person name="McWilliam S."/>
            <person name="Madan Babu M."/>
            <person name="Madera M."/>
            <person name="Marchionni L."/>
            <person name="Matsuda H."/>
            <person name="Matsuzawa S."/>
            <person name="Miki H."/>
            <person name="Mignone F."/>
            <person name="Miyake S."/>
            <person name="Morris K."/>
            <person name="Mottagui-Tabar S."/>
            <person name="Mulder N."/>
            <person name="Nakano N."/>
            <person name="Nakauchi H."/>
            <person name="Ng P."/>
            <person name="Nilsson R."/>
            <person name="Nishiguchi S."/>
            <person name="Nishikawa S."/>
            <person name="Nori F."/>
            <person name="Ohara O."/>
            <person name="Okazaki Y."/>
            <person name="Orlando V."/>
            <person name="Pang K.C."/>
            <person name="Pavan W.J."/>
            <person name="Pavesi G."/>
            <person name="Pesole G."/>
            <person name="Petrovsky N."/>
            <person name="Piazza S."/>
            <person name="Reed J."/>
            <person name="Reid J.F."/>
            <person name="Ring B.Z."/>
            <person name="Ringwald M."/>
            <person name="Rost B."/>
            <person name="Ruan Y."/>
            <person name="Salzberg S.L."/>
            <person name="Sandelin A."/>
            <person name="Schneider C."/>
            <person name="Schoenbach C."/>
            <person name="Sekiguchi K."/>
            <person name="Semple C.A."/>
            <person name="Seno S."/>
            <person name="Sessa L."/>
            <person name="Sheng Y."/>
            <person name="Shibata Y."/>
            <person name="Shimada H."/>
            <person name="Shimada K."/>
            <person name="Silva D."/>
            <person name="Sinclair B."/>
            <person name="Sperling S."/>
            <person name="Stupka E."/>
            <person name="Sugiura K."/>
            <person name="Sultana R."/>
            <person name="Takenaka Y."/>
            <person name="Taki K."/>
            <person name="Tammoja K."/>
            <person name="Tan S.L."/>
            <person name="Tang S."/>
            <person name="Taylor M.S."/>
            <person name="Tegner J."/>
            <person name="Teichmann S.A."/>
            <person name="Ueda H.R."/>
            <person name="van Nimwegen E."/>
            <person name="Verardo R."/>
            <person name="Wei C.L."/>
            <person name="Yagi K."/>
            <person name="Yamanishi H."/>
            <person name="Zabarovsky E."/>
            <person name="Zhu S."/>
            <person name="Zimmer A."/>
            <person name="Hide W."/>
            <person name="Bult C."/>
            <person name="Grimmond S.M."/>
            <person name="Teasdale R.D."/>
            <person name="Liu E.T."/>
            <person name="Brusic V."/>
            <person name="Quackenbush J."/>
            <person name="Wahlestedt C."/>
            <person name="Mattick J.S."/>
            <person name="Hume D.A."/>
            <person name="Kai C."/>
            <person name="Sasaki D."/>
            <person name="Tomaru Y."/>
            <person name="Fukuda S."/>
            <person name="Kanamori-Katayama M."/>
            <person name="Suzuki M."/>
            <person name="Aoki J."/>
            <person name="Arakawa T."/>
            <person name="Iida J."/>
            <person name="Imamura K."/>
            <person name="Itoh M."/>
            <person name="Kato T."/>
            <person name="Kawaji H."/>
            <person name="Kawagashira N."/>
            <person name="Kawashima T."/>
            <person name="Kojima M."/>
            <person name="Kondo S."/>
            <person name="Konno H."/>
            <person name="Nakano K."/>
            <person name="Ninomiya N."/>
            <person name="Nishio T."/>
            <person name="Okada M."/>
            <person name="Plessy C."/>
            <person name="Shibata K."/>
            <person name="Shiraki T."/>
            <person name="Suzuki S."/>
            <person name="Tagami M."/>
            <person name="Waki K."/>
            <person name="Watahiki A."/>
            <person name="Okamura-Oho Y."/>
            <person name="Suzuki H."/>
            <person name="Kawai J."/>
            <person name="Hayashizaki Y."/>
        </authorList>
    </citation>
    <scope>NUCLEOTIDE SEQUENCE [LARGE SCALE MRNA]</scope>
    <source>
        <strain>C57BL/6J</strain>
        <tissue>Brain cortex</tissue>
        <tissue>Medulla oblongata</tissue>
        <tissue>Pancreas</tissue>
        <tissue>Spinal ganglion</tissue>
        <tissue>Sympathetic ganglion</tissue>
    </source>
</reference>
<reference key="3">
    <citation type="journal article" date="2004" name="Genome Res.">
        <title>The status, quality, and expansion of the NIH full-length cDNA project: the Mammalian Gene Collection (MGC).</title>
        <authorList>
            <consortium name="The MGC Project Team"/>
        </authorList>
    </citation>
    <scope>NUCLEOTIDE SEQUENCE [LARGE SCALE MRNA]</scope>
    <source>
        <strain>C57BL/6J</strain>
        <tissue>Eye</tissue>
    </source>
</reference>
<reference key="4">
    <citation type="journal article" date="2010" name="Cell">
        <title>A tissue-specific atlas of mouse protein phosphorylation and expression.</title>
        <authorList>
            <person name="Huttlin E.L."/>
            <person name="Jedrychowski M.P."/>
            <person name="Elias J.E."/>
            <person name="Goswami T."/>
            <person name="Rad R."/>
            <person name="Beausoleil S.A."/>
            <person name="Villen J."/>
            <person name="Haas W."/>
            <person name="Sowa M.E."/>
            <person name="Gygi S.P."/>
        </authorList>
    </citation>
    <scope>PHOSPHORYLATION [LARGE SCALE ANALYSIS] AT SER-135</scope>
    <scope>IDENTIFICATION BY MASS SPECTROMETRY [LARGE SCALE ANALYSIS]</scope>
    <source>
        <tissue>Brain</tissue>
    </source>
</reference>
<reference key="5">
    <citation type="journal article" date="2017" name="Cell Rep.">
        <title>Capture of Dense Core Vesicles at Synapses by JNK-Dependent Phosphorylation of Synaptotagmin-4.</title>
        <authorList>
            <person name="Bharat V."/>
            <person name="Siebrecht M."/>
            <person name="Burk K."/>
            <person name="Ahmed S."/>
            <person name="Reissner C."/>
            <person name="Kohansal-Nodehi M."/>
            <person name="Steubler V."/>
            <person name="Zweckstetter M."/>
            <person name="Ting J.T."/>
            <person name="Dean C."/>
        </authorList>
    </citation>
    <scope>FUNCTION</scope>
</reference>
<sequence>MAPITTSRVEFDEIPTVVGIFSAFGLVFTVSLFAWICCQRRSAKSNKTPPYKFVHVLKGVDIYPENLSSKKKFGGDDKSEVKGKAALPNLSLHLDLEKRDLNGNFPKANPKAGSSSDLENVTPKLFTETEKEANSPESLKSSTSLTSEEKQEKLGTLFLSLEYNFEKKAFVVNIKEAQGLPAMDEQSMTSDPYIKMTILPEKKHRVKTRVLRKTLDPVFDETFTFYGIPYPHIQELSLHFTVLSFDRFSRDDVIGEVLIPLSGIELSDGKMLMTREIIKRNAKKSSGRGELLVSLCYQSTTNTLTVVVLKARHLPKSDVSGLSDPYVKVNLYHAKKRISKKKTHVKKCTPNAVFNELFVFDIPCESLEEISVEFLVLDSERGSRNEVIGRLVLGATAEGSGGGHWKEICDFPRRQIAKWHMLCDG</sequence>
<accession>P40749</accession>
<accession>Q3UFC1</accession>
<accession>Q8BGH3</accession>
<accession>Q8BRL6</accession>
<comment type="function">
    <text evidence="1 2">Synaptotagmin family member which does not bind Ca(2+). Plays a role in dendrite formation by melanocytes (By similarity).</text>
</comment>
<comment type="function">
    <text evidence="1 2 6">Synaptotagmin family member which does not bind Ca(2+) (By similarity). Involved in neuronal dense core vesicles (DCVs) mobility through its interaction with KIF1A. Upon increased neuronal activity, phosphorylation by MAPK8/JNK1 destabilizes the interaction with KIF1A and captures DCVs to synapses (PubMed:29166604). Plays a role in dendrite formation by melanocytes (By similarity).</text>
</comment>
<comment type="cofactor">
    <cofactor evidence="4">
        <name>Ca(2+)</name>
        <dbReference type="ChEBI" id="CHEBI:29108"/>
    </cofactor>
</comment>
<comment type="subunit">
    <text evidence="1">Interacts with KIF1A; the interaction increases in presence of calcium and decreases when SYT4 is phosphorylated at Ser-135.</text>
</comment>
<comment type="subcellular location">
    <subcellularLocation>
        <location evidence="1">Cytoplasmic vesicle</location>
        <location evidence="1">Secretory vesicle</location>
        <location evidence="1">Neuronal dense core vesicle membrane</location>
        <topology evidence="1">Single-pass membrane protein</topology>
    </subcellularLocation>
</comment>
<comment type="tissue specificity">
    <text evidence="7">Expressed in many regions of the nervous system but is undetectable in extra neural tissues (PubMed:8058779).</text>
</comment>
<comment type="domain">
    <text evidence="1">Unlike in other synaptotagmin family members, the first C2 domain/C2A does not bind Ca(2+) neither mediates Ca(2+)-dependent phospholipid binding. An aspartate-to-serine substitution in this domain inactivates Ca(2+)/phospho-lipid binding.</text>
</comment>
<comment type="PTM">
    <text evidence="1">Phosphorylation at Ser-135 by MAPK8/JNK1 reduces interaction with KIF1A and neuronal dense core vesicles mobility.</text>
</comment>
<comment type="similarity">
    <text evidence="8">Belongs to the synaptotagmin family.</text>
</comment>
<name>SYT4_MOUSE</name>
<evidence type="ECO:0000250" key="1">
    <source>
        <dbReference type="UniProtKB" id="P50232"/>
    </source>
</evidence>
<evidence type="ECO:0000250" key="2">
    <source>
        <dbReference type="UniProtKB" id="Q9H2B2"/>
    </source>
</evidence>
<evidence type="ECO:0000255" key="3"/>
<evidence type="ECO:0000255" key="4">
    <source>
        <dbReference type="PROSITE-ProRule" id="PRU00041"/>
    </source>
</evidence>
<evidence type="ECO:0000256" key="5">
    <source>
        <dbReference type="SAM" id="MobiDB-lite"/>
    </source>
</evidence>
<evidence type="ECO:0000269" key="6">
    <source>
    </source>
</evidence>
<evidence type="ECO:0000269" key="7">
    <source>
    </source>
</evidence>
<evidence type="ECO:0000305" key="8"/>
<evidence type="ECO:0007744" key="9">
    <source>
    </source>
</evidence>
<gene>
    <name type="primary">Syt4</name>
    <name type="synonym">Syt3</name>
</gene>
<dbReference type="EMBL" id="U10355">
    <property type="protein sequence ID" value="AAA20971.1"/>
    <property type="molecule type" value="mRNA"/>
</dbReference>
<dbReference type="EMBL" id="AK032106">
    <property type="protein sequence ID" value="BAC27705.1"/>
    <property type="molecule type" value="mRNA"/>
</dbReference>
<dbReference type="EMBL" id="AK043985">
    <property type="protein sequence ID" value="BAC31726.1"/>
    <property type="molecule type" value="mRNA"/>
</dbReference>
<dbReference type="EMBL" id="AK050515">
    <property type="protein sequence ID" value="BAC34301.1"/>
    <property type="molecule type" value="mRNA"/>
</dbReference>
<dbReference type="EMBL" id="AK083960">
    <property type="protein sequence ID" value="BAC39080.1"/>
    <property type="molecule type" value="mRNA"/>
</dbReference>
<dbReference type="EMBL" id="AK148681">
    <property type="protein sequence ID" value="BAE28640.1"/>
    <property type="molecule type" value="mRNA"/>
</dbReference>
<dbReference type="EMBL" id="BC058208">
    <property type="protein sequence ID" value="AAH58208.1"/>
    <property type="molecule type" value="mRNA"/>
</dbReference>
<dbReference type="CCDS" id="CCDS29109.1"/>
<dbReference type="RefSeq" id="NP_033334.2">
    <property type="nucleotide sequence ID" value="NM_009308.3"/>
</dbReference>
<dbReference type="SMR" id="P40749"/>
<dbReference type="BioGRID" id="203614">
    <property type="interactions" value="4"/>
</dbReference>
<dbReference type="FunCoup" id="P40749">
    <property type="interactions" value="750"/>
</dbReference>
<dbReference type="STRING" id="10090.ENSMUSP00000025110"/>
<dbReference type="iPTMnet" id="P40749"/>
<dbReference type="PhosphoSitePlus" id="P40749"/>
<dbReference type="PaxDb" id="10090-ENSMUSP00000025110"/>
<dbReference type="ProteomicsDB" id="254799"/>
<dbReference type="Antibodypedia" id="22400">
    <property type="antibodies" value="394 antibodies from 30 providers"/>
</dbReference>
<dbReference type="DNASU" id="20983"/>
<dbReference type="Ensembl" id="ENSMUST00000025110.5">
    <property type="protein sequence ID" value="ENSMUSP00000025110.4"/>
    <property type="gene ID" value="ENSMUSG00000024261.7"/>
</dbReference>
<dbReference type="GeneID" id="20983"/>
<dbReference type="KEGG" id="mmu:20983"/>
<dbReference type="UCSC" id="uc008ehy.1">
    <property type="organism name" value="mouse"/>
</dbReference>
<dbReference type="AGR" id="MGI:101759"/>
<dbReference type="CTD" id="6860"/>
<dbReference type="MGI" id="MGI:101759">
    <property type="gene designation" value="Syt4"/>
</dbReference>
<dbReference type="VEuPathDB" id="HostDB:ENSMUSG00000024261"/>
<dbReference type="eggNOG" id="KOG1028">
    <property type="taxonomic scope" value="Eukaryota"/>
</dbReference>
<dbReference type="GeneTree" id="ENSGT00940000159026"/>
<dbReference type="HOGENOM" id="CLU_023008_7_3_1"/>
<dbReference type="InParanoid" id="P40749"/>
<dbReference type="OMA" id="SIEYNFE"/>
<dbReference type="OrthoDB" id="270970at2759"/>
<dbReference type="PhylomeDB" id="P40749"/>
<dbReference type="TreeFam" id="TF315600"/>
<dbReference type="BioGRID-ORCS" id="20983">
    <property type="hits" value="4 hits in 79 CRISPR screens"/>
</dbReference>
<dbReference type="ChiTaRS" id="Syt3">
    <property type="organism name" value="mouse"/>
</dbReference>
<dbReference type="PRO" id="PR:P40749"/>
<dbReference type="Proteomes" id="UP000000589">
    <property type="component" value="Chromosome 18"/>
</dbReference>
<dbReference type="RNAct" id="P40749">
    <property type="molecule type" value="protein"/>
</dbReference>
<dbReference type="Bgee" id="ENSMUSG00000024261">
    <property type="expression patterns" value="Expressed in cerebellum lobe and 133 other cell types or tissues"/>
</dbReference>
<dbReference type="GO" id="GO:0097449">
    <property type="term" value="C:astrocyte projection"/>
    <property type="evidence" value="ECO:0000314"/>
    <property type="project" value="ParkinsonsUK-UCL"/>
</dbReference>
<dbReference type="GO" id="GO:0030424">
    <property type="term" value="C:axon"/>
    <property type="evidence" value="ECO:0000314"/>
    <property type="project" value="ParkinsonsUK-UCL"/>
</dbReference>
<dbReference type="GO" id="GO:0030425">
    <property type="term" value="C:dendrite"/>
    <property type="evidence" value="ECO:0000314"/>
    <property type="project" value="ParkinsonsUK-UCL"/>
</dbReference>
<dbReference type="GO" id="GO:0031045">
    <property type="term" value="C:dense core granule"/>
    <property type="evidence" value="ECO:0000314"/>
    <property type="project" value="ParkinsonsUK-UCL"/>
</dbReference>
<dbReference type="GO" id="GO:0070382">
    <property type="term" value="C:exocytic vesicle"/>
    <property type="evidence" value="ECO:0007669"/>
    <property type="project" value="Ensembl"/>
</dbReference>
<dbReference type="GO" id="GO:0098978">
    <property type="term" value="C:glutamatergic synapse"/>
    <property type="evidence" value="ECO:0000314"/>
    <property type="project" value="SynGO"/>
</dbReference>
<dbReference type="GO" id="GO:0005794">
    <property type="term" value="C:Golgi apparatus"/>
    <property type="evidence" value="ECO:0000314"/>
    <property type="project" value="ParkinsonsUK-UCL"/>
</dbReference>
<dbReference type="GO" id="GO:0016020">
    <property type="term" value="C:membrane"/>
    <property type="evidence" value="ECO:0000304"/>
    <property type="project" value="UniProtKB"/>
</dbReference>
<dbReference type="GO" id="GO:1990742">
    <property type="term" value="C:microvesicle"/>
    <property type="evidence" value="ECO:0000314"/>
    <property type="project" value="ParkinsonsUK-UCL"/>
</dbReference>
<dbReference type="GO" id="GO:0043005">
    <property type="term" value="C:neuron projection"/>
    <property type="evidence" value="ECO:0000314"/>
    <property type="project" value="MGI"/>
</dbReference>
<dbReference type="GO" id="GO:0044306">
    <property type="term" value="C:neuron projection terminus"/>
    <property type="evidence" value="ECO:0007669"/>
    <property type="project" value="Ensembl"/>
</dbReference>
<dbReference type="GO" id="GO:0043025">
    <property type="term" value="C:neuronal cell body"/>
    <property type="evidence" value="ECO:0000314"/>
    <property type="project" value="ParkinsonsUK-UCL"/>
</dbReference>
<dbReference type="GO" id="GO:0098992">
    <property type="term" value="C:neuronal dense core vesicle"/>
    <property type="evidence" value="ECO:0000250"/>
    <property type="project" value="UniProtKB"/>
</dbReference>
<dbReference type="GO" id="GO:0099012">
    <property type="term" value="C:neuronal dense core vesicle membrane"/>
    <property type="evidence" value="ECO:0000314"/>
    <property type="project" value="SynGO"/>
</dbReference>
<dbReference type="GO" id="GO:0048471">
    <property type="term" value="C:perinuclear region of cytoplasm"/>
    <property type="evidence" value="ECO:0000314"/>
    <property type="project" value="ParkinsonsUK-UCL"/>
</dbReference>
<dbReference type="GO" id="GO:0005886">
    <property type="term" value="C:plasma membrane"/>
    <property type="evidence" value="ECO:0000314"/>
    <property type="project" value="ParkinsonsUK-UCL"/>
</dbReference>
<dbReference type="GO" id="GO:0098793">
    <property type="term" value="C:presynapse"/>
    <property type="evidence" value="ECO:0000303"/>
    <property type="project" value="SynGO-UCL"/>
</dbReference>
<dbReference type="GO" id="GO:0036477">
    <property type="term" value="C:somatodendritic compartment"/>
    <property type="evidence" value="ECO:0000314"/>
    <property type="project" value="ParkinsonsUK-UCL"/>
</dbReference>
<dbReference type="GO" id="GO:0031982">
    <property type="term" value="C:vesicle"/>
    <property type="evidence" value="ECO:0000314"/>
    <property type="project" value="ParkinsonsUK-UCL"/>
</dbReference>
<dbReference type="GO" id="GO:0005509">
    <property type="term" value="F:calcium ion binding"/>
    <property type="evidence" value="ECO:0000314"/>
    <property type="project" value="MGI"/>
</dbReference>
<dbReference type="GO" id="GO:0005544">
    <property type="term" value="F:calcium-dependent phospholipid binding"/>
    <property type="evidence" value="ECO:0000314"/>
    <property type="project" value="ParkinsonsUK-UCL"/>
</dbReference>
<dbReference type="GO" id="GO:0030276">
    <property type="term" value="F:clathrin binding"/>
    <property type="evidence" value="ECO:0007669"/>
    <property type="project" value="Ensembl"/>
</dbReference>
<dbReference type="GO" id="GO:0001786">
    <property type="term" value="F:phosphatidylserine binding"/>
    <property type="evidence" value="ECO:0007669"/>
    <property type="project" value="Ensembl"/>
</dbReference>
<dbReference type="GO" id="GO:0046982">
    <property type="term" value="F:protein heterodimerization activity"/>
    <property type="evidence" value="ECO:0007669"/>
    <property type="project" value="Ensembl"/>
</dbReference>
<dbReference type="GO" id="GO:0042803">
    <property type="term" value="F:protein homodimerization activity"/>
    <property type="evidence" value="ECO:0007669"/>
    <property type="project" value="Ensembl"/>
</dbReference>
<dbReference type="GO" id="GO:0017075">
    <property type="term" value="F:syntaxin-1 binding"/>
    <property type="evidence" value="ECO:0007669"/>
    <property type="project" value="Ensembl"/>
</dbReference>
<dbReference type="GO" id="GO:0030348">
    <property type="term" value="F:syntaxin-3 binding"/>
    <property type="evidence" value="ECO:0007669"/>
    <property type="project" value="Ensembl"/>
</dbReference>
<dbReference type="GO" id="GO:0030154">
    <property type="term" value="P:cell differentiation"/>
    <property type="evidence" value="ECO:0007669"/>
    <property type="project" value="UniProtKB-KW"/>
</dbReference>
<dbReference type="GO" id="GO:0099519">
    <property type="term" value="P:dense core granule cytoskeletal transport"/>
    <property type="evidence" value="ECO:0000315"/>
    <property type="project" value="UniProtKB"/>
</dbReference>
<dbReference type="GO" id="GO:0007613">
    <property type="term" value="P:memory"/>
    <property type="evidence" value="ECO:0000315"/>
    <property type="project" value="ParkinsonsUK-UCL"/>
</dbReference>
<dbReference type="GO" id="GO:0033604">
    <property type="term" value="P:negative regulation of catecholamine secretion"/>
    <property type="evidence" value="ECO:0007669"/>
    <property type="project" value="Ensembl"/>
</dbReference>
<dbReference type="GO" id="GO:1905414">
    <property type="term" value="P:negative regulation of dense core granule exocytosis"/>
    <property type="evidence" value="ECO:0007669"/>
    <property type="project" value="Ensembl"/>
</dbReference>
<dbReference type="GO" id="GO:0046929">
    <property type="term" value="P:negative regulation of neurotransmitter secretion"/>
    <property type="evidence" value="ECO:0007669"/>
    <property type="project" value="Ensembl"/>
</dbReference>
<dbReference type="GO" id="GO:0050709">
    <property type="term" value="P:negative regulation of protein secretion"/>
    <property type="evidence" value="ECO:0000315"/>
    <property type="project" value="SynGO-UCL"/>
</dbReference>
<dbReference type="GO" id="GO:1905433">
    <property type="term" value="P:negative regulation of retrograde trans-synaptic signaling by neuropeptide"/>
    <property type="evidence" value="ECO:0000315"/>
    <property type="project" value="SynGO-UCL"/>
</dbReference>
<dbReference type="GO" id="GO:0048174">
    <property type="term" value="P:negative regulation of short-term neuronal synaptic plasticity"/>
    <property type="evidence" value="ECO:0000315"/>
    <property type="project" value="ParkinsonsUK-UCL"/>
</dbReference>
<dbReference type="GO" id="GO:2000301">
    <property type="term" value="P:negative regulation of synaptic vesicle exocytosis"/>
    <property type="evidence" value="ECO:0000315"/>
    <property type="project" value="SynGO-UCL"/>
</dbReference>
<dbReference type="GO" id="GO:0031339">
    <property type="term" value="P:negative regulation of vesicle fusion"/>
    <property type="evidence" value="ECO:0007669"/>
    <property type="project" value="Ensembl"/>
</dbReference>
<dbReference type="GO" id="GO:0007269">
    <property type="term" value="P:neurotransmitter secretion"/>
    <property type="evidence" value="ECO:0000314"/>
    <property type="project" value="MGI"/>
</dbReference>
<dbReference type="GO" id="GO:1903861">
    <property type="term" value="P:positive regulation of dendrite extension"/>
    <property type="evidence" value="ECO:0007669"/>
    <property type="project" value="Ensembl"/>
</dbReference>
<dbReference type="GO" id="GO:1905415">
    <property type="term" value="P:positive regulation of dense core granule exocytosis"/>
    <property type="evidence" value="ECO:0000315"/>
    <property type="project" value="ParkinsonsUK-UCL"/>
</dbReference>
<dbReference type="GO" id="GO:0014049">
    <property type="term" value="P:positive regulation of glutamate secretion"/>
    <property type="evidence" value="ECO:0000315"/>
    <property type="project" value="ParkinsonsUK-UCL"/>
</dbReference>
<dbReference type="GO" id="GO:0017158">
    <property type="term" value="P:regulation of calcium ion-dependent exocytosis"/>
    <property type="evidence" value="ECO:0000315"/>
    <property type="project" value="ParkinsonsUK-UCL"/>
</dbReference>
<dbReference type="GO" id="GO:0014059">
    <property type="term" value="P:regulation of dopamine secretion"/>
    <property type="evidence" value="ECO:0000315"/>
    <property type="project" value="ParkinsonsUK-UCL"/>
</dbReference>
<dbReference type="GO" id="GO:0030100">
    <property type="term" value="P:regulation of endocytosis"/>
    <property type="evidence" value="ECO:0000315"/>
    <property type="project" value="ParkinsonsUK-UCL"/>
</dbReference>
<dbReference type="GO" id="GO:0150044">
    <property type="term" value="P:regulation of postsynaptic dense core vesicle exocytosis"/>
    <property type="evidence" value="ECO:0000314"/>
    <property type="project" value="SynGO"/>
</dbReference>
<dbReference type="GO" id="GO:0150035">
    <property type="term" value="P:regulation of trans-synaptic signaling by BDNF, modulating synaptic transmission"/>
    <property type="evidence" value="ECO:0000314"/>
    <property type="project" value="SynGO"/>
</dbReference>
<dbReference type="GO" id="GO:0031338">
    <property type="term" value="P:regulation of vesicle fusion"/>
    <property type="evidence" value="ECO:0000315"/>
    <property type="project" value="ParkinsonsUK-UCL"/>
</dbReference>
<dbReference type="GO" id="GO:0061792">
    <property type="term" value="P:secretory granule maturation"/>
    <property type="evidence" value="ECO:0007669"/>
    <property type="project" value="Ensembl"/>
</dbReference>
<dbReference type="GO" id="GO:0048489">
    <property type="term" value="P:synaptic vesicle transport"/>
    <property type="evidence" value="ECO:0000304"/>
    <property type="project" value="UniProtKB"/>
</dbReference>
<dbReference type="GO" id="GO:0061782">
    <property type="term" value="P:vesicle fusion with vesicle"/>
    <property type="evidence" value="ECO:0007669"/>
    <property type="project" value="Ensembl"/>
</dbReference>
<dbReference type="CDD" id="cd08388">
    <property type="entry name" value="C2A_Synaptotagmin-4-11"/>
    <property type="match status" value="1"/>
</dbReference>
<dbReference type="CDD" id="cd08404">
    <property type="entry name" value="C2B_Synaptotagmin-4"/>
    <property type="match status" value="1"/>
</dbReference>
<dbReference type="FunFam" id="2.60.40.150:FF:000039">
    <property type="entry name" value="Synaptotagmin 11"/>
    <property type="match status" value="1"/>
</dbReference>
<dbReference type="FunFam" id="2.60.40.150:FF:000051">
    <property type="entry name" value="Synaptotagmin 11"/>
    <property type="match status" value="1"/>
</dbReference>
<dbReference type="Gene3D" id="2.60.40.150">
    <property type="entry name" value="C2 domain"/>
    <property type="match status" value="2"/>
</dbReference>
<dbReference type="InterPro" id="IPR000008">
    <property type="entry name" value="C2_dom"/>
</dbReference>
<dbReference type="InterPro" id="IPR035892">
    <property type="entry name" value="C2_domain_sf"/>
</dbReference>
<dbReference type="InterPro" id="IPR001565">
    <property type="entry name" value="Synaptotagmin"/>
</dbReference>
<dbReference type="PANTHER" id="PTHR10024">
    <property type="entry name" value="SYNAPTOTAGMIN"/>
    <property type="match status" value="1"/>
</dbReference>
<dbReference type="PANTHER" id="PTHR10024:SF114">
    <property type="entry name" value="SYNAPTOTAGMIN-4"/>
    <property type="match status" value="1"/>
</dbReference>
<dbReference type="Pfam" id="PF00168">
    <property type="entry name" value="C2"/>
    <property type="match status" value="2"/>
</dbReference>
<dbReference type="PRINTS" id="PR00399">
    <property type="entry name" value="SYNAPTOTAGMN"/>
</dbReference>
<dbReference type="SMART" id="SM00239">
    <property type="entry name" value="C2"/>
    <property type="match status" value="2"/>
</dbReference>
<dbReference type="SUPFAM" id="SSF49562">
    <property type="entry name" value="C2 domain (Calcium/lipid-binding domain, CaLB)"/>
    <property type="match status" value="2"/>
</dbReference>
<dbReference type="PROSITE" id="PS50004">
    <property type="entry name" value="C2"/>
    <property type="match status" value="2"/>
</dbReference>